<accession>P08037</accession>
<accession>Q0VC05</accession>
<accession>Q8MIG0</accession>
<sequence>MKFREPLLGGSAAMPGASLQRACRLLVAVCALHLGVTLVYYLAGRDLRRLPQLVGVHPPLQGSSHGAAAIGQPSGELRLRGVAPPPPLQNSSKPRSRAPSNLDAYSHPGPGPGPGSNLTSAPVPSTTTRSLTACPEESPLLVGPMLIEFNIPVDLKLVEQQNPKVKLGGRYTPMDCISPHKVAIIIPFRNRQEHLKYWLYYLHPILQRQQLDYGIYVINQAGESMFNRAKLLNVGFKEALKDYDYNCFVFSDVDLIPMNDHNTYRCFSQPRHISVAMDKFGFSLPYVQYFGGVSALSKQQFLSINGFPNNYWGWGGEDDDIYNRLAFRGMSVSRPNAVIGKCRMIRHSRDKKNEPNPQRFDRIAHTKETMLSDGLNSLTYMVLEVQRYPLYTKITVDIGTPS</sequence>
<protein>
    <recommendedName>
        <fullName evidence="11">Beta-1,4-galactosyltransferase 1</fullName>
        <shortName>Beta-1,4-GalTase 1</shortName>
        <shortName>Beta4Gal-T1</shortName>
        <shortName>b4Gal-T1</shortName>
        <ecNumber evidence="9">2.4.1.-</ecNumber>
    </recommendedName>
    <alternativeName>
        <fullName>Beta-N-acetylglucosaminyl-glycolipid beta-1,4-galactosyltransferase</fullName>
    </alternativeName>
    <alternativeName>
        <fullName evidence="10">Beta-N-acetylglucosaminylglycopeptide beta-1,4-galactosyltransferase</fullName>
        <ecNumber evidence="9">2.4.1.38</ecNumber>
    </alternativeName>
    <alternativeName>
        <fullName>Lactose synthase A protein</fullName>
        <ecNumber>2.4.1.22</ecNumber>
    </alternativeName>
    <alternativeName>
        <fullName evidence="10">N-acetyllactosamine synthase</fullName>
        <ecNumber evidence="9">2.4.1.90</ecNumber>
    </alternativeName>
    <alternativeName>
        <fullName>Nal synthase</fullName>
    </alternativeName>
    <alternativeName>
        <fullName evidence="10">Neolactotriaosylceramide beta-1,4-galactosyltransferase</fullName>
        <ecNumber evidence="9">2.4.1.275</ecNumber>
    </alternativeName>
    <alternativeName>
        <fullName>UDP-Gal:beta-GlcNAc beta-1,4-galactosyltransferase 1</fullName>
    </alternativeName>
    <alternativeName>
        <fullName>UDP-galactose:beta-N-acetylglucosamine beta-1,4-galactosyltransferase 1</fullName>
    </alternativeName>
    <component>
        <recommendedName>
            <fullName>Processed beta-1,4-galactosyltransferase 1</fullName>
        </recommendedName>
    </component>
</protein>
<keyword id="KW-0002">3D-structure</keyword>
<keyword id="KW-0024">Alternative initiation</keyword>
<keyword id="KW-1003">Cell membrane</keyword>
<keyword id="KW-0966">Cell projection</keyword>
<keyword id="KW-0903">Direct protein sequencing</keyword>
<keyword id="KW-1015">Disulfide bond</keyword>
<keyword id="KW-0325">Glycoprotein</keyword>
<keyword id="KW-0328">Glycosyltransferase</keyword>
<keyword id="KW-0333">Golgi apparatus</keyword>
<keyword id="KW-0443">Lipid metabolism</keyword>
<keyword id="KW-0464">Manganese</keyword>
<keyword id="KW-0472">Membrane</keyword>
<keyword id="KW-0479">Metal-binding</keyword>
<keyword id="KW-1185">Reference proteome</keyword>
<keyword id="KW-0964">Secreted</keyword>
<keyword id="KW-0735">Signal-anchor</keyword>
<keyword id="KW-0808">Transferase</keyword>
<keyword id="KW-0812">Transmembrane</keyword>
<keyword id="KW-1133">Transmembrane helix</keyword>
<organism>
    <name type="scientific">Bos taurus</name>
    <name type="common">Bovine</name>
    <dbReference type="NCBI Taxonomy" id="9913"/>
    <lineage>
        <taxon>Eukaryota</taxon>
        <taxon>Metazoa</taxon>
        <taxon>Chordata</taxon>
        <taxon>Craniata</taxon>
        <taxon>Vertebrata</taxon>
        <taxon>Euteleostomi</taxon>
        <taxon>Mammalia</taxon>
        <taxon>Eutheria</taxon>
        <taxon>Laurasiatheria</taxon>
        <taxon>Artiodactyla</taxon>
        <taxon>Ruminantia</taxon>
        <taxon>Pecora</taxon>
        <taxon>Bovidae</taxon>
        <taxon>Bovinae</taxon>
        <taxon>Bos</taxon>
    </lineage>
</organism>
<evidence type="ECO:0000250" key="1">
    <source>
        <dbReference type="UniProtKB" id="P15291"/>
    </source>
</evidence>
<evidence type="ECO:0000250" key="2">
    <source>
        <dbReference type="UniProtKB" id="P15535"/>
    </source>
</evidence>
<evidence type="ECO:0000255" key="3"/>
<evidence type="ECO:0000256" key="4">
    <source>
        <dbReference type="SAM" id="MobiDB-lite"/>
    </source>
</evidence>
<evidence type="ECO:0000269" key="5">
    <source>
    </source>
</evidence>
<evidence type="ECO:0000269" key="6">
    <source>
    </source>
</evidence>
<evidence type="ECO:0000269" key="7">
    <source>
    </source>
</evidence>
<evidence type="ECO:0000269" key="8">
    <source>
    </source>
</evidence>
<evidence type="ECO:0000269" key="9">
    <source>
    </source>
</evidence>
<evidence type="ECO:0000303" key="10">
    <source>
    </source>
</evidence>
<evidence type="ECO:0000305" key="11"/>
<evidence type="ECO:0000305" key="12">
    <source>
    </source>
</evidence>
<evidence type="ECO:0000305" key="13">
    <source>
    </source>
</evidence>
<evidence type="ECO:0000305" key="14">
    <source>
    </source>
</evidence>
<evidence type="ECO:0007829" key="15">
    <source>
        <dbReference type="PDB" id="1FR8"/>
    </source>
</evidence>
<evidence type="ECO:0007829" key="16">
    <source>
        <dbReference type="PDB" id="1NF5"/>
    </source>
</evidence>
<evidence type="ECO:0007829" key="17">
    <source>
        <dbReference type="PDB" id="1TVY"/>
    </source>
</evidence>
<evidence type="ECO:0007829" key="18">
    <source>
        <dbReference type="PDB" id="1YRO"/>
    </source>
</evidence>
<comment type="function">
    <molecule>Beta-1,4-galactosyltransferase 1</molecule>
    <text evidence="8">The Golgi complex form catalyzes the production of lactose in the lactating mammary gland and could also be responsible for the synthesis of complex-type N-linked oligosaccharides in many glycoproteins as well as the carbohydrate moieties of glycolipids.</text>
</comment>
<comment type="function">
    <molecule>Processed beta-1,4-galactosyltransferase 1</molecule>
    <text evidence="9">The cell surface form functions as a recognition molecule during a variety of cell to cell and cell to matrix interactions, as those occurring during development and egg fertilization, by binding to specific oligosaccharide ligands on opposing cells or in the extracellular matrix. The secreted form is responsible for the synthesis of complex-type to N-linked oligosaccharides in many glycoproteins as well as the carbohydrate moieties of glycolipids (PubMed:9405390).</text>
</comment>
<comment type="catalytic activity">
    <reaction evidence="8 9">
        <text>D-glucose + UDP-alpha-D-galactose = lactose + UDP + H(+)</text>
        <dbReference type="Rhea" id="RHEA:12404"/>
        <dbReference type="ChEBI" id="CHEBI:4167"/>
        <dbReference type="ChEBI" id="CHEBI:15378"/>
        <dbReference type="ChEBI" id="CHEBI:17716"/>
        <dbReference type="ChEBI" id="CHEBI:58223"/>
        <dbReference type="ChEBI" id="CHEBI:66914"/>
        <dbReference type="EC" id="2.4.1.22"/>
    </reaction>
    <physiologicalReaction direction="left-to-right" evidence="9 12">
        <dbReference type="Rhea" id="RHEA:12405"/>
    </physiologicalReaction>
</comment>
<comment type="catalytic activity">
    <reaction evidence="9">
        <text>an N-acetyl-beta-D-glucosaminyl derivative + UDP-alpha-D-galactose = a beta-D-galactosyl-(1-&gt;4)-N-acetyl-beta-D-glucosaminyl derivative + UDP + H(+)</text>
        <dbReference type="Rhea" id="RHEA:22932"/>
        <dbReference type="ChEBI" id="CHEBI:15378"/>
        <dbReference type="ChEBI" id="CHEBI:58223"/>
        <dbReference type="ChEBI" id="CHEBI:61631"/>
        <dbReference type="ChEBI" id="CHEBI:66914"/>
        <dbReference type="ChEBI" id="CHEBI:133507"/>
        <dbReference type="EC" id="2.4.1.38"/>
    </reaction>
    <physiologicalReaction direction="left-to-right" evidence="9">
        <dbReference type="Rhea" id="RHEA:22933"/>
    </physiologicalReaction>
</comment>
<comment type="catalytic activity">
    <reaction evidence="9">
        <text>N-acetyl-D-glucosamine + UDP-alpha-D-galactose = beta-D-galactosyl-(1-&gt;4)-N-acetyl-D-glucosamine + UDP + H(+)</text>
        <dbReference type="Rhea" id="RHEA:17745"/>
        <dbReference type="ChEBI" id="CHEBI:15378"/>
        <dbReference type="ChEBI" id="CHEBI:58223"/>
        <dbReference type="ChEBI" id="CHEBI:60152"/>
        <dbReference type="ChEBI" id="CHEBI:66914"/>
        <dbReference type="ChEBI" id="CHEBI:506227"/>
        <dbReference type="EC" id="2.4.1.90"/>
    </reaction>
    <physiologicalReaction direction="left-to-right" evidence="9">
        <dbReference type="Rhea" id="RHEA:17746"/>
    </physiologicalReaction>
</comment>
<comment type="catalytic activity">
    <reaction evidence="9">
        <text>a beta-D-GlcNAc-(1-&gt;3)-beta-D-Gal-(1-&gt;4)-beta-D-Glc-(1&lt;-&gt;1)-Cer(d18:1(4E)) + UDP-alpha-D-galactose = a neolactoside nLc4Cer(d18:1(4E)) + UDP + H(+)</text>
        <dbReference type="Rhea" id="RHEA:31499"/>
        <dbReference type="ChEBI" id="CHEBI:15378"/>
        <dbReference type="ChEBI" id="CHEBI:17006"/>
        <dbReference type="ChEBI" id="CHEBI:17103"/>
        <dbReference type="ChEBI" id="CHEBI:58223"/>
        <dbReference type="ChEBI" id="CHEBI:66914"/>
        <dbReference type="EC" id="2.4.1.275"/>
    </reaction>
    <physiologicalReaction direction="left-to-right" evidence="9">
        <dbReference type="Rhea" id="RHEA:31500"/>
    </physiologicalReaction>
</comment>
<comment type="catalytic activity">
    <reaction evidence="9">
        <text>a beta-D-glucosylceramide + UDP-alpha-D-galactose = a beta-D-galactosyl-(1-&gt;4)-beta-D-glucosyl-(1&lt;-&gt;1)-ceramide + UDP + H(+)</text>
        <dbReference type="Rhea" id="RHEA:62552"/>
        <dbReference type="ChEBI" id="CHEBI:15378"/>
        <dbReference type="ChEBI" id="CHEBI:58223"/>
        <dbReference type="ChEBI" id="CHEBI:66914"/>
        <dbReference type="ChEBI" id="CHEBI:79208"/>
        <dbReference type="ChEBI" id="CHEBI:83264"/>
    </reaction>
    <physiologicalReaction direction="left-to-right" evidence="9">
        <dbReference type="Rhea" id="RHEA:62553"/>
    </physiologicalReaction>
</comment>
<comment type="catalytic activity">
    <reaction evidence="9">
        <text>a neolactoside IV(3)-beta-GlcNAc-nLc4Cer + UDP-alpha-D-galactose = a neolactoside nLc6Cer + UDP + H(+)</text>
        <dbReference type="Rhea" id="RHEA:62548"/>
        <dbReference type="ChEBI" id="CHEBI:15378"/>
        <dbReference type="ChEBI" id="CHEBI:58223"/>
        <dbReference type="ChEBI" id="CHEBI:66914"/>
        <dbReference type="ChEBI" id="CHEBI:90357"/>
        <dbReference type="ChEBI" id="CHEBI:144378"/>
    </reaction>
    <physiologicalReaction direction="left-to-right" evidence="9">
        <dbReference type="Rhea" id="RHEA:62549"/>
    </physiologicalReaction>
</comment>
<comment type="cofactor">
    <cofactor evidence="1">
        <name>Mn(2+)</name>
        <dbReference type="ChEBI" id="CHEBI:29035"/>
    </cofactor>
</comment>
<comment type="biophysicochemical properties">
    <kinetics>
        <KM evidence="9">0.034 mM for UDP-galactose</KM>
        <KM evidence="9">0.53 mM for benzyl-beta-D-GlcNAc</KM>
        <KM evidence="9">9.6 mM for D-GlcNAc</KM>
        <Vmax evidence="9">73.0 pmol/min/mg enzyme towards UDP-galactose</Vmax>
        <Vmax evidence="9">44.1 pmol/min/mg enzyme towards for benzyl-beta-D-GlcNAc</Vmax>
        <Vmax evidence="9">56.8 pmol/min/mg enzyme towards D-GlcNAc</Vmax>
        <Vmax evidence="9">297.0 nmol/h/mg enzyme towards lactotriaosylceramide (d18:1(4E))</Vmax>
        <Vmax evidence="9">333.0 nmol/h/mg enzyme towards lactopentaosylceramide (d18:1(4E))</Vmax>
        <Vmax evidence="9">40.3 nmol/h/mg enzyme towards GlcCer</Vmax>
    </kinetics>
</comment>
<comment type="pathway">
    <text evidence="9">Protein modification; protein glycosylation.</text>
</comment>
<comment type="subunit">
    <text evidence="2 5 6 7 8">Homodimer; and heterodimer with alpha-lactalbumin to form lactose synthase (PubMed:10393171, PubMed:11419947, PubMed:12051854, PubMed:12927542). Interacts (via N-terminal cytoplasmic domain) with UBE2Q1 (via N-terminus); the interaction is direct (By similarity).</text>
</comment>
<comment type="interaction">
    <interactant intactId="EBI-1031436">
        <id>P08037</id>
    </interactant>
    <interactant intactId="EBI-1031454">
        <id>P29752</id>
        <label>Lalba</label>
    </interactant>
    <organismsDiffer>true</organismsDiffer>
    <experiments>10</experiments>
</comment>
<comment type="subcellular location">
    <molecule>Isoform Long</molecule>
    <subcellularLocation>
        <location evidence="2">Golgi apparatus</location>
        <location evidence="2">Golgi stack membrane</location>
        <topology>Single-pass type II membrane protein</topology>
    </subcellularLocation>
    <subcellularLocation>
        <location>Cell membrane</location>
        <topology>Single-pass type II membrane protein</topology>
    </subcellularLocation>
    <subcellularLocation>
        <location>Cell surface</location>
    </subcellularLocation>
    <subcellularLocation>
        <location evidence="2">Cell projection</location>
        <location evidence="2">Filopodium</location>
    </subcellularLocation>
    <text evidence="2">Found in trans cisternae of Golgi. B4GALT1 cell surface expression is regulated by UBE2Q1 (By similarity).</text>
</comment>
<comment type="subcellular location">
    <molecule>Isoform Short</molecule>
    <subcellularLocation>
        <location>Golgi apparatus</location>
        <location>Golgi stack membrane</location>
        <topology>Single-pass type II membrane protein</topology>
    </subcellularLocation>
    <text>Found in trans cisternae of Golgi.</text>
</comment>
<comment type="subcellular location">
    <molecule>Processed beta-1,4-galactosyltransferase 1</molecule>
    <subcellularLocation>
        <location evidence="14">Secreted</location>
    </subcellularLocation>
    <text evidence="9">Soluble form found in body fluids.</text>
</comment>
<comment type="alternative products">
    <event type="alternative initiation"/>
    <isoform>
        <id>P08037-1</id>
        <name>Long</name>
        <name>Cell surface</name>
        <sequence type="displayed"/>
    </isoform>
    <isoform>
        <id>P08037-2</id>
        <name>Short</name>
        <name>Golgi complex</name>
        <sequence type="described" ref="VSP_018801"/>
    </isoform>
</comment>
<comment type="tissue specificity">
    <text evidence="9">Detected in milk (at protein level).</text>
</comment>
<comment type="PTM">
    <text>The soluble form derives from the membrane forms by proteolytic processing.</text>
</comment>
<comment type="similarity">
    <text evidence="11">Belongs to the glycosyltransferase 7 family.</text>
</comment>
<name>B4GT1_BOVIN</name>
<dbReference type="EC" id="2.4.1.-" evidence="9"/>
<dbReference type="EC" id="2.4.1.38" evidence="9"/>
<dbReference type="EC" id="2.4.1.22"/>
<dbReference type="EC" id="2.4.1.90" evidence="9"/>
<dbReference type="EC" id="2.4.1.275" evidence="9"/>
<dbReference type="EMBL" id="X14558">
    <property type="protein sequence ID" value="CAA32695.1"/>
    <property type="molecule type" value="mRNA"/>
</dbReference>
<dbReference type="EMBL" id="BC120415">
    <property type="protein sequence ID" value="AAI20416.1"/>
    <property type="molecule type" value="mRNA"/>
</dbReference>
<dbReference type="EMBL" id="M13214">
    <property type="protein sequence ID" value="AAA30534.1"/>
    <property type="molecule type" value="mRNA"/>
</dbReference>
<dbReference type="EMBL" id="AF515786">
    <property type="protein sequence ID" value="AAM54035.2"/>
    <property type="molecule type" value="mRNA"/>
</dbReference>
<dbReference type="EMBL" id="M25398">
    <property type="protein sequence ID" value="AAA30533.1"/>
    <property type="molecule type" value="Genomic_DNA"/>
</dbReference>
<dbReference type="EMBL" id="J05217">
    <property type="protein sequence ID" value="AAA30559.1"/>
    <property type="molecule type" value="mRNA"/>
</dbReference>
<dbReference type="PIR" id="I45897">
    <property type="entry name" value="I45897"/>
</dbReference>
<dbReference type="PIR" id="S05018">
    <property type="entry name" value="S05018"/>
</dbReference>
<dbReference type="RefSeq" id="NP_803478.1">
    <property type="nucleotide sequence ID" value="NM_177512.2"/>
</dbReference>
<dbReference type="PDB" id="1FGX">
    <property type="method" value="X-ray"/>
    <property type="resolution" value="2.40 A"/>
    <property type="chains" value="A/B=115-402"/>
</dbReference>
<dbReference type="PDB" id="1FR8">
    <property type="method" value="X-ray"/>
    <property type="resolution" value="2.40 A"/>
    <property type="chains" value="A/B=115-402"/>
</dbReference>
<dbReference type="PDB" id="1NF5">
    <property type="method" value="X-ray"/>
    <property type="resolution" value="2.00 A"/>
    <property type="chains" value="B/D=130-402"/>
</dbReference>
<dbReference type="PDB" id="1NHE">
    <property type="method" value="X-ray"/>
    <property type="resolution" value="2.50 A"/>
    <property type="chains" value="B/D=130-402"/>
</dbReference>
<dbReference type="PDB" id="1NKH">
    <property type="method" value="X-ray"/>
    <property type="resolution" value="2.00 A"/>
    <property type="chains" value="B/D=130-402"/>
</dbReference>
<dbReference type="PDB" id="1NMM">
    <property type="method" value="X-ray"/>
    <property type="resolution" value="2.00 A"/>
    <property type="chains" value="B/D=130-402"/>
</dbReference>
<dbReference type="PDB" id="1NQI">
    <property type="method" value="X-ray"/>
    <property type="resolution" value="2.00 A"/>
    <property type="chains" value="B/D=130-402"/>
</dbReference>
<dbReference type="PDB" id="1NWG">
    <property type="method" value="X-ray"/>
    <property type="resolution" value="2.32 A"/>
    <property type="chains" value="B/D=130-402"/>
</dbReference>
<dbReference type="PDB" id="1O0R">
    <property type="method" value="X-ray"/>
    <property type="resolution" value="2.30 A"/>
    <property type="chains" value="A/B=130-402"/>
</dbReference>
<dbReference type="PDB" id="1O23">
    <property type="method" value="X-ray"/>
    <property type="resolution" value="2.32 A"/>
    <property type="chains" value="B/D=130-402"/>
</dbReference>
<dbReference type="PDB" id="1OQM">
    <property type="method" value="X-ray"/>
    <property type="resolution" value="2.10 A"/>
    <property type="chains" value="B/D=130-402"/>
</dbReference>
<dbReference type="PDB" id="1PZT">
    <property type="method" value="X-ray"/>
    <property type="resolution" value="1.92 A"/>
    <property type="chains" value="A=130-402"/>
</dbReference>
<dbReference type="PDB" id="1PZY">
    <property type="method" value="X-ray"/>
    <property type="resolution" value="2.30 A"/>
    <property type="chains" value="B/D=130-402"/>
</dbReference>
<dbReference type="PDB" id="1TVY">
    <property type="method" value="X-ray"/>
    <property type="resolution" value="2.30 A"/>
    <property type="chains" value="A/B=130-402"/>
</dbReference>
<dbReference type="PDB" id="1TW1">
    <property type="method" value="X-ray"/>
    <property type="resolution" value="2.30 A"/>
    <property type="chains" value="A/B=130-402"/>
</dbReference>
<dbReference type="PDB" id="1TW5">
    <property type="method" value="X-ray"/>
    <property type="resolution" value="2.30 A"/>
    <property type="chains" value="A/B=130-402"/>
</dbReference>
<dbReference type="PDB" id="1YRO">
    <property type="method" value="X-ray"/>
    <property type="resolution" value="1.90 A"/>
    <property type="chains" value="B/D=130-402"/>
</dbReference>
<dbReference type="PDB" id="2FYC">
    <property type="method" value="X-ray"/>
    <property type="resolution" value="2.00 A"/>
    <property type="chains" value="B/D=130-402"/>
</dbReference>
<dbReference type="PDB" id="2FYD">
    <property type="method" value="X-ray"/>
    <property type="resolution" value="2.00 A"/>
    <property type="chains" value="B/D=130-400"/>
</dbReference>
<dbReference type="PDB" id="4KRV">
    <property type="method" value="X-ray"/>
    <property type="resolution" value="2.40 A"/>
    <property type="chains" value="A/B=130-402"/>
</dbReference>
<dbReference type="PDBsum" id="1FGX"/>
<dbReference type="PDBsum" id="1FR8"/>
<dbReference type="PDBsum" id="1NF5"/>
<dbReference type="PDBsum" id="1NHE"/>
<dbReference type="PDBsum" id="1NKH"/>
<dbReference type="PDBsum" id="1NMM"/>
<dbReference type="PDBsum" id="1NQI"/>
<dbReference type="PDBsum" id="1NWG"/>
<dbReference type="PDBsum" id="1O0R"/>
<dbReference type="PDBsum" id="1O23"/>
<dbReference type="PDBsum" id="1OQM"/>
<dbReference type="PDBsum" id="1PZT"/>
<dbReference type="PDBsum" id="1PZY"/>
<dbReference type="PDBsum" id="1TVY"/>
<dbReference type="PDBsum" id="1TW1"/>
<dbReference type="PDBsum" id="1TW5"/>
<dbReference type="PDBsum" id="1YRO"/>
<dbReference type="PDBsum" id="2FYC"/>
<dbReference type="PDBsum" id="2FYD"/>
<dbReference type="PDBsum" id="4KRV"/>
<dbReference type="SMR" id="P08037"/>
<dbReference type="FunCoup" id="P08037">
    <property type="interactions" value="1066"/>
</dbReference>
<dbReference type="IntAct" id="P08037">
    <property type="interactions" value="1"/>
</dbReference>
<dbReference type="STRING" id="9913.ENSBTAP00000020286"/>
<dbReference type="BindingDB" id="P08037"/>
<dbReference type="ChEMBL" id="CHEMBL3214"/>
<dbReference type="CAZy" id="GT7">
    <property type="family name" value="Glycosyltransferase Family 7"/>
</dbReference>
<dbReference type="MoonProt" id="P08037"/>
<dbReference type="GlyCosmos" id="P08037">
    <property type="glycosylation" value="2 sites, No reported glycans"/>
</dbReference>
<dbReference type="GlyGen" id="P08037">
    <property type="glycosylation" value="2 sites"/>
</dbReference>
<dbReference type="iPTMnet" id="P08037"/>
<dbReference type="PaxDb" id="9913-ENSBTAP00000020286"/>
<dbReference type="PeptideAtlas" id="P08037"/>
<dbReference type="Ensembl" id="ENSBTAT00000020286.6">
    <molecule id="P08037-1"/>
    <property type="protein sequence ID" value="ENSBTAP00000020286.5"/>
    <property type="gene ID" value="ENSBTAG00000015249.6"/>
</dbReference>
<dbReference type="GeneID" id="281781"/>
<dbReference type="KEGG" id="bta:281781"/>
<dbReference type="CTD" id="2683"/>
<dbReference type="VEuPathDB" id="HostDB:ENSBTAG00000015249"/>
<dbReference type="eggNOG" id="KOG3916">
    <property type="taxonomic scope" value="Eukaryota"/>
</dbReference>
<dbReference type="GeneTree" id="ENSGT00940000155244"/>
<dbReference type="HOGENOM" id="CLU_044391_0_1_1"/>
<dbReference type="InParanoid" id="P08037"/>
<dbReference type="OMA" id="IYKCYDQ"/>
<dbReference type="OrthoDB" id="10016069at2759"/>
<dbReference type="TreeFam" id="TF312834"/>
<dbReference type="BRENDA" id="2.4.1.133">
    <property type="organism ID" value="908"/>
</dbReference>
<dbReference type="BRENDA" id="2.4.1.38">
    <property type="organism ID" value="908"/>
</dbReference>
<dbReference type="BRENDA" id="2.4.1.90">
    <property type="organism ID" value="908"/>
</dbReference>
<dbReference type="Reactome" id="R-BTA-2022854">
    <property type="pathway name" value="Keratan sulfate biosynthesis"/>
</dbReference>
<dbReference type="Reactome" id="R-BTA-2534343">
    <property type="pathway name" value="Interaction With Cumulus Cells And The Zona Pellucida"/>
</dbReference>
<dbReference type="Reactome" id="R-BTA-5653890">
    <property type="pathway name" value="Lactose synthesis"/>
</dbReference>
<dbReference type="Reactome" id="R-BTA-6798695">
    <property type="pathway name" value="Neutrophil degranulation"/>
</dbReference>
<dbReference type="Reactome" id="R-BTA-975577">
    <property type="pathway name" value="N-Glycan antennae elongation"/>
</dbReference>
<dbReference type="SABIO-RK" id="P08037"/>
<dbReference type="UniPathway" id="UPA00378"/>
<dbReference type="EvolutionaryTrace" id="P08037"/>
<dbReference type="Proteomes" id="UP000009136">
    <property type="component" value="Chromosome 8"/>
</dbReference>
<dbReference type="Bgee" id="ENSBTAG00000015249">
    <property type="expression patterns" value="Expressed in parenchyma of mammary gland and 104 other cell types or tissues"/>
</dbReference>
<dbReference type="GO" id="GO:0016323">
    <property type="term" value="C:basolateral plasma membrane"/>
    <property type="evidence" value="ECO:0000250"/>
    <property type="project" value="UniProtKB"/>
</dbReference>
<dbReference type="GO" id="GO:0031526">
    <property type="term" value="C:brush border membrane"/>
    <property type="evidence" value="ECO:0000250"/>
    <property type="project" value="UniProtKB"/>
</dbReference>
<dbReference type="GO" id="GO:0030057">
    <property type="term" value="C:desmosome"/>
    <property type="evidence" value="ECO:0000250"/>
    <property type="project" value="UniProtKB"/>
</dbReference>
<dbReference type="GO" id="GO:0009897">
    <property type="term" value="C:external side of plasma membrane"/>
    <property type="evidence" value="ECO:0000250"/>
    <property type="project" value="UniProtKB"/>
</dbReference>
<dbReference type="GO" id="GO:0005615">
    <property type="term" value="C:extracellular space"/>
    <property type="evidence" value="ECO:0000314"/>
    <property type="project" value="CAFA"/>
</dbReference>
<dbReference type="GO" id="GO:0030175">
    <property type="term" value="C:filopodium"/>
    <property type="evidence" value="ECO:0007669"/>
    <property type="project" value="UniProtKB-SubCell"/>
</dbReference>
<dbReference type="GO" id="GO:0005794">
    <property type="term" value="C:Golgi apparatus"/>
    <property type="evidence" value="ECO:0000250"/>
    <property type="project" value="UniProtKB"/>
</dbReference>
<dbReference type="GO" id="GO:0032580">
    <property type="term" value="C:Golgi cisterna membrane"/>
    <property type="evidence" value="ECO:0007669"/>
    <property type="project" value="UniProtKB-SubCell"/>
</dbReference>
<dbReference type="GO" id="GO:0000138">
    <property type="term" value="C:Golgi trans cisterna"/>
    <property type="evidence" value="ECO:0000250"/>
    <property type="project" value="UniProtKB"/>
</dbReference>
<dbReference type="GO" id="GO:0032991">
    <property type="term" value="C:protein-containing complex"/>
    <property type="evidence" value="ECO:0007669"/>
    <property type="project" value="Ensembl"/>
</dbReference>
<dbReference type="GO" id="GO:0043014">
    <property type="term" value="F:alpha-tubulin binding"/>
    <property type="evidence" value="ECO:0000250"/>
    <property type="project" value="UniProtKB"/>
</dbReference>
<dbReference type="GO" id="GO:0003831">
    <property type="term" value="F:beta-N-acetylglucosaminylglycopeptide beta-1,4-galactosyltransferase activity"/>
    <property type="evidence" value="ECO:0000314"/>
    <property type="project" value="UniProtKB"/>
</dbReference>
<dbReference type="GO" id="GO:0048487">
    <property type="term" value="F:beta-tubulin binding"/>
    <property type="evidence" value="ECO:0000250"/>
    <property type="project" value="UniProtKB"/>
</dbReference>
<dbReference type="GO" id="GO:0042802">
    <property type="term" value="F:identical protein binding"/>
    <property type="evidence" value="ECO:0000250"/>
    <property type="project" value="UniProtKB"/>
</dbReference>
<dbReference type="GO" id="GO:0004461">
    <property type="term" value="F:lactose synthase activity"/>
    <property type="evidence" value="ECO:0000250"/>
    <property type="project" value="UniProtKB"/>
</dbReference>
<dbReference type="GO" id="GO:0030145">
    <property type="term" value="F:manganese ion binding"/>
    <property type="evidence" value="ECO:0000250"/>
    <property type="project" value="UniProtKB"/>
</dbReference>
<dbReference type="GO" id="GO:0003945">
    <property type="term" value="F:N-acetyllactosamine synthase activity"/>
    <property type="evidence" value="ECO:0000250"/>
    <property type="project" value="UniProtKB"/>
</dbReference>
<dbReference type="GO" id="GO:0035250">
    <property type="term" value="F:UDP-galactosyltransferase activity"/>
    <property type="evidence" value="ECO:0000250"/>
    <property type="project" value="UniProtKB"/>
</dbReference>
<dbReference type="GO" id="GO:0002526">
    <property type="term" value="P:acute inflammatory response"/>
    <property type="evidence" value="ECO:0007669"/>
    <property type="project" value="Ensembl"/>
</dbReference>
<dbReference type="GO" id="GO:0060055">
    <property type="term" value="P:angiogenesis involved in wound healing"/>
    <property type="evidence" value="ECO:0007669"/>
    <property type="project" value="Ensembl"/>
</dbReference>
<dbReference type="GO" id="GO:0007339">
    <property type="term" value="P:binding of sperm to zona pellucida"/>
    <property type="evidence" value="ECO:0007669"/>
    <property type="project" value="Ensembl"/>
</dbReference>
<dbReference type="GO" id="GO:0007155">
    <property type="term" value="P:cell adhesion"/>
    <property type="evidence" value="ECO:0007669"/>
    <property type="project" value="Ensembl"/>
</dbReference>
<dbReference type="GO" id="GO:0045136">
    <property type="term" value="P:development of secondary sexual characteristics"/>
    <property type="evidence" value="ECO:0007669"/>
    <property type="project" value="Ensembl"/>
</dbReference>
<dbReference type="GO" id="GO:0002064">
    <property type="term" value="P:epithelial cell development"/>
    <property type="evidence" value="ECO:0007669"/>
    <property type="project" value="Ensembl"/>
</dbReference>
<dbReference type="GO" id="GO:0050673">
    <property type="term" value="P:epithelial cell proliferation"/>
    <property type="evidence" value="ECO:0007669"/>
    <property type="project" value="Ensembl"/>
</dbReference>
<dbReference type="GO" id="GO:0030198">
    <property type="term" value="P:extracellular matrix organization"/>
    <property type="evidence" value="ECO:0007669"/>
    <property type="project" value="Ensembl"/>
</dbReference>
<dbReference type="GO" id="GO:0006012">
    <property type="term" value="P:galactose metabolic process"/>
    <property type="evidence" value="ECO:0007669"/>
    <property type="project" value="Ensembl"/>
</dbReference>
<dbReference type="GO" id="GO:0005989">
    <property type="term" value="P:lactose biosynthetic process"/>
    <property type="evidence" value="ECO:0000314"/>
    <property type="project" value="CAFA"/>
</dbReference>
<dbReference type="GO" id="GO:0006629">
    <property type="term" value="P:lipid metabolic process"/>
    <property type="evidence" value="ECO:0000250"/>
    <property type="project" value="UniProtKB"/>
</dbReference>
<dbReference type="GO" id="GO:1905517">
    <property type="term" value="P:macrophage migration"/>
    <property type="evidence" value="ECO:0007669"/>
    <property type="project" value="Ensembl"/>
</dbReference>
<dbReference type="GO" id="GO:0050680">
    <property type="term" value="P:negative regulation of epithelial cell proliferation"/>
    <property type="evidence" value="ECO:0007669"/>
    <property type="project" value="Ensembl"/>
</dbReference>
<dbReference type="GO" id="GO:0009312">
    <property type="term" value="P:oligosaccharide biosynthetic process"/>
    <property type="evidence" value="ECO:0000250"/>
    <property type="project" value="UniProtKB"/>
</dbReference>
<dbReference type="GO" id="GO:0007341">
    <property type="term" value="P:penetration of zona pellucida"/>
    <property type="evidence" value="ECO:0007669"/>
    <property type="project" value="Ensembl"/>
</dbReference>
<dbReference type="GO" id="GO:0043065">
    <property type="term" value="P:positive regulation of apoptotic process"/>
    <property type="evidence" value="ECO:0007669"/>
    <property type="project" value="Ensembl"/>
</dbReference>
<dbReference type="GO" id="GO:0061755">
    <property type="term" value="P:positive regulation of circulating fibrinogen levels"/>
    <property type="evidence" value="ECO:0000250"/>
    <property type="project" value="UniProtKB"/>
</dbReference>
<dbReference type="GO" id="GO:0060054">
    <property type="term" value="P:positive regulation of epithelial cell proliferation involved in wound healing"/>
    <property type="evidence" value="ECO:0007669"/>
    <property type="project" value="Ensembl"/>
</dbReference>
<dbReference type="GO" id="GO:0042125">
    <property type="term" value="P:protein galactosylation"/>
    <property type="evidence" value="ECO:0000314"/>
    <property type="project" value="UniProtKB"/>
</dbReference>
<dbReference type="GO" id="GO:0006487">
    <property type="term" value="P:protein N-linked glycosylation"/>
    <property type="evidence" value="ECO:0000314"/>
    <property type="project" value="CAFA"/>
</dbReference>
<dbReference type="GO" id="GO:0060046">
    <property type="term" value="P:regulation of acrosome reaction"/>
    <property type="evidence" value="ECO:0007669"/>
    <property type="project" value="Ensembl"/>
</dbReference>
<dbReference type="CDD" id="cd00899">
    <property type="entry name" value="b4GalT"/>
    <property type="match status" value="1"/>
</dbReference>
<dbReference type="FunFam" id="3.90.550.10:FF:000028">
    <property type="entry name" value="beta-1,4-galactosyltransferase 1"/>
    <property type="match status" value="1"/>
</dbReference>
<dbReference type="Gene3D" id="3.90.550.10">
    <property type="entry name" value="Spore Coat Polysaccharide Biosynthesis Protein SpsA, Chain A"/>
    <property type="match status" value="1"/>
</dbReference>
<dbReference type="InterPro" id="IPR003859">
    <property type="entry name" value="Galactosyl_T"/>
</dbReference>
<dbReference type="InterPro" id="IPR027791">
    <property type="entry name" value="Galactosyl_T_C"/>
</dbReference>
<dbReference type="InterPro" id="IPR027995">
    <property type="entry name" value="Galactosyl_T_N"/>
</dbReference>
<dbReference type="InterPro" id="IPR029044">
    <property type="entry name" value="Nucleotide-diphossugar_trans"/>
</dbReference>
<dbReference type="PANTHER" id="PTHR19300">
    <property type="entry name" value="BETA-1,4-GALACTOSYLTRANSFERASE"/>
    <property type="match status" value="1"/>
</dbReference>
<dbReference type="PANTHER" id="PTHR19300:SF5">
    <property type="entry name" value="BETA-1,4-GALACTOSYLTRANSFERASE 1"/>
    <property type="match status" value="1"/>
</dbReference>
<dbReference type="Pfam" id="PF02709">
    <property type="entry name" value="Glyco_transf_7C"/>
    <property type="match status" value="1"/>
</dbReference>
<dbReference type="Pfam" id="PF13733">
    <property type="entry name" value="Glyco_transf_7N"/>
    <property type="match status" value="1"/>
</dbReference>
<dbReference type="PRINTS" id="PR02050">
    <property type="entry name" value="B14GALTRFASE"/>
</dbReference>
<dbReference type="SUPFAM" id="SSF53448">
    <property type="entry name" value="Nucleotide-diphospho-sugar transferases"/>
    <property type="match status" value="1"/>
</dbReference>
<feature type="chain" id="PRO_0000012276" description="Beta-1,4-galactosyltransferase 1">
    <location>
        <begin position="1"/>
        <end position="402"/>
    </location>
</feature>
<feature type="chain" id="PRO_0000296228" description="Processed beta-1,4-galactosyltransferase 1">
    <location>
        <begin status="unknown"/>
        <end position="402"/>
    </location>
</feature>
<feature type="topological domain" description="Cytoplasmic" evidence="3">
    <location>
        <begin position="1"/>
        <end position="24"/>
    </location>
</feature>
<feature type="transmembrane region" description="Helical; Signal-anchor for type II membrane protein" evidence="3">
    <location>
        <begin position="25"/>
        <end position="44"/>
    </location>
</feature>
<feature type="topological domain" description="Lumenal" evidence="3">
    <location>
        <begin position="45"/>
        <end position="402"/>
    </location>
</feature>
<feature type="region of interest" description="Disordered" evidence="4">
    <location>
        <begin position="77"/>
        <end position="130"/>
    </location>
</feature>
<feature type="compositionally biased region" description="Polar residues" evidence="4">
    <location>
        <begin position="116"/>
        <end position="130"/>
    </location>
</feature>
<feature type="binding site">
    <location>
        <begin position="187"/>
        <end position="191"/>
    </location>
    <ligand>
        <name>UDP-alpha-D-galactose</name>
        <dbReference type="ChEBI" id="CHEBI:66914"/>
    </ligand>
</feature>
<feature type="binding site">
    <location>
        <begin position="226"/>
        <end position="228"/>
    </location>
    <ligand>
        <name>UDP-alpha-D-galactose</name>
        <dbReference type="ChEBI" id="CHEBI:66914"/>
    </ligand>
</feature>
<feature type="binding site">
    <location>
        <begin position="253"/>
        <end position="254"/>
    </location>
    <ligand>
        <name>UDP-alpha-D-galactose</name>
        <dbReference type="ChEBI" id="CHEBI:66914"/>
    </ligand>
</feature>
<feature type="binding site">
    <location>
        <position position="254"/>
    </location>
    <ligand>
        <name>Mn(2+)</name>
        <dbReference type="ChEBI" id="CHEBI:29035"/>
    </ligand>
</feature>
<feature type="binding site">
    <location>
        <position position="314"/>
    </location>
    <ligand>
        <name>UDP-alpha-D-galactose</name>
        <dbReference type="ChEBI" id="CHEBI:66914"/>
    </ligand>
</feature>
<feature type="binding site">
    <location>
        <begin position="316"/>
        <end position="319"/>
    </location>
    <ligand>
        <name>N-acetyl-D-glucosamine</name>
        <dbReference type="ChEBI" id="CHEBI:506227"/>
    </ligand>
</feature>
<feature type="binding site">
    <location>
        <begin position="347"/>
        <end position="349"/>
    </location>
    <ligand>
        <name>UDP-alpha-D-galactose</name>
        <dbReference type="ChEBI" id="CHEBI:66914"/>
    </ligand>
</feature>
<feature type="binding site">
    <location>
        <position position="347"/>
    </location>
    <ligand>
        <name>Mn(2+)</name>
        <dbReference type="ChEBI" id="CHEBI:29035"/>
    </ligand>
</feature>
<feature type="binding site">
    <location>
        <position position="359"/>
    </location>
    <ligand>
        <name>N-acetyl-D-glucosamine</name>
        <dbReference type="ChEBI" id="CHEBI:506227"/>
    </ligand>
</feature>
<feature type="glycosylation site" description="N-linked (GlcNAc...) asparagine" evidence="13">
    <location>
        <position position="90"/>
    </location>
</feature>
<feature type="glycosylation site" description="N-linked (GlcNAc...) asparagine" evidence="3">
    <location>
        <position position="117"/>
    </location>
</feature>
<feature type="disulfide bond">
    <location>
        <begin position="134"/>
        <end position="176"/>
    </location>
</feature>
<feature type="disulfide bond">
    <location>
        <begin position="247"/>
        <end position="266"/>
    </location>
</feature>
<feature type="splice variant" id="VSP_018801" description="In isoform Short." evidence="11">
    <location>
        <begin position="1"/>
        <end position="13"/>
    </location>
</feature>
<feature type="mutagenesis site" description="Reduces galactosyltransferase activity, lactose synthase activity and substrate binding by 99%." evidence="8">
    <original>W</original>
    <variation>A</variation>
    <location>
        <position position="314"/>
    </location>
</feature>
<feature type="sequence conflict" description="In Ref. 7." evidence="11" ref="7">
    <original>HG</original>
    <variation>QA</variation>
    <location>
        <begin position="65"/>
        <end position="66"/>
    </location>
</feature>
<feature type="sequence conflict" description="In Ref. 1; CAA32695." evidence="11" ref="1">
    <original>V</original>
    <variation>I</variation>
    <location>
        <position position="158"/>
    </location>
</feature>
<feature type="sequence conflict" description="In Ref. 1; CAA32695." evidence="11" ref="1">
    <original>P</original>
    <variation>L</variation>
    <location>
        <position position="187"/>
    </location>
</feature>
<feature type="sequence conflict" description="In Ref. 1; CAA32695." evidence="11" ref="1">
    <original>IL</original>
    <variation>MV</variation>
    <location>
        <begin position="205"/>
        <end position="206"/>
    </location>
</feature>
<feature type="sequence conflict" description="In Ref. 3; AAA30534." evidence="11" ref="3">
    <original>F</original>
    <variation>L</variation>
    <location>
        <position position="282"/>
    </location>
</feature>
<feature type="strand" evidence="17">
    <location>
        <begin position="149"/>
        <end position="151"/>
    </location>
</feature>
<feature type="helix" evidence="18">
    <location>
        <begin position="155"/>
        <end position="161"/>
    </location>
</feature>
<feature type="turn" evidence="18">
    <location>
        <begin position="167"/>
        <end position="169"/>
    </location>
</feature>
<feature type="strand" evidence="18">
    <location>
        <begin position="174"/>
        <end position="177"/>
    </location>
</feature>
<feature type="strand" evidence="18">
    <location>
        <begin position="181"/>
        <end position="190"/>
    </location>
</feature>
<feature type="helix" evidence="18">
    <location>
        <begin position="192"/>
        <end position="208"/>
    </location>
</feature>
<feature type="strand" evidence="18">
    <location>
        <begin position="212"/>
        <end position="220"/>
    </location>
</feature>
<feature type="strand" evidence="18">
    <location>
        <begin position="222"/>
        <end position="224"/>
    </location>
</feature>
<feature type="helix" evidence="18">
    <location>
        <begin position="228"/>
        <end position="242"/>
    </location>
</feature>
<feature type="strand" evidence="18">
    <location>
        <begin position="247"/>
        <end position="251"/>
    </location>
</feature>
<feature type="strand" evidence="18">
    <location>
        <begin position="255"/>
        <end position="259"/>
    </location>
</feature>
<feature type="helix" evidence="18">
    <location>
        <begin position="278"/>
        <end position="280"/>
    </location>
</feature>
<feature type="strand" evidence="18">
    <location>
        <begin position="292"/>
        <end position="297"/>
    </location>
</feature>
<feature type="helix" evidence="18">
    <location>
        <begin position="298"/>
        <end position="303"/>
    </location>
</feature>
<feature type="strand" evidence="18">
    <location>
        <begin position="313"/>
        <end position="316"/>
    </location>
</feature>
<feature type="helix" evidence="18">
    <location>
        <begin position="317"/>
        <end position="327"/>
    </location>
</feature>
<feature type="turn" evidence="18">
    <location>
        <begin position="337"/>
        <end position="340"/>
    </location>
</feature>
<feature type="strand" evidence="18">
    <location>
        <begin position="341"/>
        <end position="344"/>
    </location>
</feature>
<feature type="turn" evidence="15">
    <location>
        <begin position="347"/>
        <end position="349"/>
    </location>
</feature>
<feature type="helix" evidence="16">
    <location>
        <begin position="351"/>
        <end position="353"/>
    </location>
</feature>
<feature type="helix" evidence="18">
    <location>
        <begin position="359"/>
        <end position="364"/>
    </location>
</feature>
<feature type="helix" evidence="18">
    <location>
        <begin position="366"/>
        <end position="369"/>
    </location>
</feature>
<feature type="turn" evidence="18">
    <location>
        <begin position="370"/>
        <end position="372"/>
    </location>
</feature>
<feature type="helix" evidence="18">
    <location>
        <begin position="375"/>
        <end position="377"/>
    </location>
</feature>
<feature type="strand" evidence="18">
    <location>
        <begin position="381"/>
        <end position="387"/>
    </location>
</feature>
<feature type="strand" evidence="18">
    <location>
        <begin position="392"/>
        <end position="397"/>
    </location>
</feature>
<reference key="1">
    <citation type="journal article" date="1989" name="Eur. J. Biochem.">
        <title>Cloning of cDNA encoding the membrane-bound form of bovine beta 1,4-galactosyltransferase.</title>
        <authorList>
            <person name="D'Agostaro G."/>
            <person name="Bendiak B."/>
            <person name="Tropak M."/>
        </authorList>
    </citation>
    <scope>NUCLEOTIDE SEQUENCE [MRNA]</scope>
    <source>
        <tissue>Liver</tissue>
    </source>
</reference>
<reference key="2">
    <citation type="submission" date="2006-08" db="EMBL/GenBank/DDBJ databases">
        <authorList>
            <consortium name="NIH - Mammalian Gene Collection (MGC) project"/>
        </authorList>
    </citation>
    <scope>NUCLEOTIDE SEQUENCE [LARGE SCALE MRNA]</scope>
    <source>
        <strain>Hereford</strain>
        <tissue>Fetal skin</tissue>
    </source>
</reference>
<reference key="3">
    <citation type="journal article" date="1986" name="Proc. Natl. Acad. Sci. U.S.A.">
        <title>Bovine galactosyltransferase: identification of a clone by direct immunological screening of a cDNA expression library.</title>
        <authorList>
            <person name="Shaper N.L."/>
            <person name="Shaper J.H."/>
            <person name="Meuth J.L."/>
            <person name="Fox J.L."/>
            <person name="Chang H."/>
            <person name="Kirsch I.R."/>
            <person name="Hollis G.F."/>
        </authorList>
    </citation>
    <scope>NUCLEOTIDE SEQUENCE [MRNA] OF 69-402</scope>
</reference>
<reference key="4">
    <citation type="journal article" date="1986" name="Proc. Natl. Acad. Sci. U.S.A.">
        <title>Cloning and sequencing of cDNA of bovine N-acetylglucosamine (beta 1-4)galactosyltransferase.</title>
        <authorList>
            <person name="Narimatsu H."/>
            <person name="Sinha S."/>
            <person name="Brew K."/>
            <person name="Okayama H."/>
            <person name="Qasba P.K."/>
        </authorList>
    </citation>
    <scope>NUCLEOTIDE SEQUENCE [MRNA] OF 74-402</scope>
</reference>
<reference key="5">
    <citation type="submission" date="2002-05" db="EMBL/GenBank/DDBJ databases">
        <authorList>
            <person name="Qasba P.K."/>
            <person name="Narimatsu H."/>
            <person name="Masibay A.S."/>
        </authorList>
    </citation>
    <scope>SEQUENCE REVISION TO 164; 256 AND 265</scope>
</reference>
<reference key="6">
    <citation type="journal article" date="1989" name="Proc. Natl. Acad. Sci. U.S.A.">
        <title>Expression of bovine beta-1,4-galactosyltransferase cDNA in COS-7 cells.</title>
        <authorList>
            <person name="Masibay A.S."/>
            <person name="Qasba P.K."/>
        </authorList>
    </citation>
    <scope>NUCLEOTIDE SEQUENCE [GENOMIC DNA] OF 1-77</scope>
</reference>
<reference key="7">
    <citation type="journal article" date="1990" name="J. Biol. Chem.">
        <title>Bovine beta 1--&gt;4-galactosyltransferase: two sets of mRNA transcripts encode two forms of the protein with different amino-terminal domains. In vitro translation experiments demonstrate that both the short and the long forms of the enzyme are type II membrane-bound glycoproteins.</title>
        <authorList>
            <person name="Russo R.N."/>
            <person name="Shaper N.L."/>
            <person name="Shaper J.H."/>
        </authorList>
    </citation>
    <scope>NUCLEOTIDE SEQUENCE [MRNA] OF 1-165</scope>
</reference>
<reference key="8">
    <citation type="journal article" date="1990" name="J. Biol. Chem.">
        <title>Identification of a region of UDP-galactose:N-acetylglucosamine beta 4-galactosyltransferase involved in UDP-galactose binding by differential labeling.</title>
        <authorList>
            <person name="Yadav S.P."/>
            <person name="Brew K."/>
        </authorList>
    </citation>
    <scope>PARTIAL PROTEIN SEQUENCE</scope>
    <scope>GLYCOSYLATION AT ASN-90</scope>
</reference>
<reference key="9">
    <citation type="journal article" date="1991" name="J. Biol. Chem.">
        <title>Structure and function in galactosyltransferase. Sequence locations of alpha-lactalbumin binding site, thiol groups, and disulfide bond.</title>
        <authorList>
            <person name="Yadav S.P."/>
            <person name="Brew K."/>
        </authorList>
    </citation>
    <scope>DISULFIDE BOND</scope>
</reference>
<reference key="10">
    <citation type="journal article" date="1997" name="J. Biol. Chem.">
        <title>A family of human beta4-galactosyltransferases. Cloning and expression of two novel UDP-galactose:beta-n-acetylglucosamine beta1, 4-galactosyltransferases, beta4Gal-T2 and beta4Gal-T3.</title>
        <authorList>
            <person name="Almeida R."/>
            <person name="Amado M."/>
            <person name="David L."/>
            <person name="Levery S.B."/>
            <person name="Holmes E.H."/>
            <person name="Merkx G."/>
            <person name="van Kessel A.G."/>
            <person name="Rygaard E."/>
            <person name="Hassan H."/>
            <person name="Bennett E."/>
            <person name="Clausen H."/>
        </authorList>
    </citation>
    <scope>CATALYTIC ACTIVITY</scope>
    <scope>SUBCELLULAR LOCATION</scope>
    <scope>TISSUE SPECIFICITY</scope>
    <scope>BIOPHYSICOCHEMICAL PROPERTIES</scope>
</reference>
<reference key="11">
    <citation type="journal article" date="1999" name="EMBO J.">
        <title>Crystal structures of the bovine beta4galactosyltransferase catalytic domain and its complex with uridine diphosphogalactose.</title>
        <authorList>
            <person name="Gastinel L.N."/>
            <person name="Cambillau C."/>
            <person name="Bourne Y."/>
        </authorList>
    </citation>
    <scope>X-RAY CRYSTALLOGRAPHY (2.4 ANGSTROMS) OF 115-402 IN COMPLEX WITH SUBSTRATE</scope>
    <scope>DISULFIDE BONDS</scope>
</reference>
<reference key="12">
    <citation type="journal article" date="2001" name="J. Mol. Biol.">
        <title>Crystal structure of lactose synthase reveals a large conformational change in its catalytic component, the beta1,4-galactosyltransferase-I.</title>
        <authorList>
            <person name="Ramakrishnan B."/>
            <person name="Qasba P.K."/>
        </authorList>
    </citation>
    <scope>X-RAY CRYSTALLOGRAPHY (2.0 ANGSTROMS) OF 117-402 IN COMPLEX WITH SUBSTRATE AND MANGANESE IONS</scope>
</reference>
<reference key="13">
    <citation type="journal article" date="2002" name="J. Mol. Biol.">
        <title>Crystal structure of beta1,4-galactosyltransferase complex with UDP-Gal reveals an oligosaccharide acceptor binding site.</title>
        <authorList>
            <person name="Ramakrishnan B."/>
            <person name="Balaji P.V."/>
            <person name="Qasba P.K."/>
        </authorList>
    </citation>
    <scope>X-RAY CRYSTALLOGRAPHY (2.3 ANGSTROMS) OF 117-402 IN COMPLEX WITH SUBSTRATE AND MANGANESE IONS</scope>
</reference>
<reference key="14">
    <citation type="journal article" date="2003" name="J. Mol. Biol.">
        <title>The role of tryptophan 314 in the conformational changes of beta1,4-galactosyltransferase-I.</title>
        <authorList>
            <person name="Ramasamy V."/>
            <person name="Ramakrishnan B."/>
            <person name="Boeggeman E."/>
            <person name="Qasba P.K."/>
        </authorList>
    </citation>
    <scope>X-RAY CRYSTALLOGRAPHY (1.92 ANGSTROMS) OF 117-402 OF MUTANT THR-342 IN COMPLEX WITH SUBSTRATE AND MANGANESE IONS</scope>
    <scope>MUTAGENESIS OF TRP-314</scope>
    <scope>FUNCTION</scope>
    <scope>CATALYTIC ACTIVITY</scope>
</reference>
<proteinExistence type="evidence at protein level"/>
<gene>
    <name type="primary">B4GALT1</name>
    <name type="synonym">GALT</name>
    <name type="synonym">GGTB2</name>
</gene>